<feature type="chain" id="PRO_0000107014" description="Uncharacterized protein MJ0752">
    <location>
        <begin position="1"/>
        <end position="76"/>
    </location>
</feature>
<accession>Q58162</accession>
<evidence type="ECO:0000305" key="1"/>
<reference key="1">
    <citation type="journal article" date="1996" name="Science">
        <title>Complete genome sequence of the methanogenic archaeon, Methanococcus jannaschii.</title>
        <authorList>
            <person name="Bult C.J."/>
            <person name="White O."/>
            <person name="Olsen G.J."/>
            <person name="Zhou L."/>
            <person name="Fleischmann R.D."/>
            <person name="Sutton G.G."/>
            <person name="Blake J.A."/>
            <person name="FitzGerald L.M."/>
            <person name="Clayton R.A."/>
            <person name="Gocayne J.D."/>
            <person name="Kerlavage A.R."/>
            <person name="Dougherty B.A."/>
            <person name="Tomb J.-F."/>
            <person name="Adams M.D."/>
            <person name="Reich C.I."/>
            <person name="Overbeek R."/>
            <person name="Kirkness E.F."/>
            <person name="Weinstock K.G."/>
            <person name="Merrick J.M."/>
            <person name="Glodek A."/>
            <person name="Scott J.L."/>
            <person name="Geoghagen N.S.M."/>
            <person name="Weidman J.F."/>
            <person name="Fuhrmann J.L."/>
            <person name="Nguyen D."/>
            <person name="Utterback T.R."/>
            <person name="Kelley J.M."/>
            <person name="Peterson J.D."/>
            <person name="Sadow P.W."/>
            <person name="Hanna M.C."/>
            <person name="Cotton M.D."/>
            <person name="Roberts K.M."/>
            <person name="Hurst M.A."/>
            <person name="Kaine B.P."/>
            <person name="Borodovsky M."/>
            <person name="Klenk H.-P."/>
            <person name="Fraser C.M."/>
            <person name="Smith H.O."/>
            <person name="Woese C.R."/>
            <person name="Venter J.C."/>
        </authorList>
    </citation>
    <scope>NUCLEOTIDE SEQUENCE [LARGE SCALE GENOMIC DNA]</scope>
    <source>
        <strain>ATCC 43067 / DSM 2661 / JAL-1 / JCM 10045 / NBRC 100440</strain>
    </source>
</reference>
<name>Y752_METJA</name>
<comment type="similarity">
    <text evidence="1">To M.jannaschii MJ0857 N-terminal region.</text>
</comment>
<keyword id="KW-1185">Reference proteome</keyword>
<dbReference type="EMBL" id="L77117">
    <property type="protein sequence ID" value="AAB98754.1"/>
    <property type="molecule type" value="Genomic_DNA"/>
</dbReference>
<dbReference type="PIR" id="H64393">
    <property type="entry name" value="H64393"/>
</dbReference>
<dbReference type="STRING" id="243232.MJ_0752"/>
<dbReference type="PaxDb" id="243232-MJ_0752"/>
<dbReference type="EnsemblBacteria" id="AAB98754">
    <property type="protein sequence ID" value="AAB98754"/>
    <property type="gene ID" value="MJ_0752"/>
</dbReference>
<dbReference type="KEGG" id="mja:MJ_0752"/>
<dbReference type="eggNOG" id="arCOG00679">
    <property type="taxonomic scope" value="Archaea"/>
</dbReference>
<dbReference type="HOGENOM" id="CLU_2645918_0_0_2"/>
<dbReference type="InParanoid" id="Q58162"/>
<dbReference type="Proteomes" id="UP000000805">
    <property type="component" value="Chromosome"/>
</dbReference>
<gene>
    <name type="ordered locus">MJ0752</name>
</gene>
<protein>
    <recommendedName>
        <fullName>Uncharacterized protein MJ0752</fullName>
    </recommendedName>
</protein>
<sequence length="76" mass="9186">MMEVIKAIEFKYYSDVVELIYDFKEMVNFCIDKAMELGITSYAKLRKAIYNEWKEKWYPKYHTHYCHSACRVATSI</sequence>
<organism>
    <name type="scientific">Methanocaldococcus jannaschii (strain ATCC 43067 / DSM 2661 / JAL-1 / JCM 10045 / NBRC 100440)</name>
    <name type="common">Methanococcus jannaschii</name>
    <dbReference type="NCBI Taxonomy" id="243232"/>
    <lineage>
        <taxon>Archaea</taxon>
        <taxon>Methanobacteriati</taxon>
        <taxon>Methanobacteriota</taxon>
        <taxon>Methanomada group</taxon>
        <taxon>Methanococci</taxon>
        <taxon>Methanococcales</taxon>
        <taxon>Methanocaldococcaceae</taxon>
        <taxon>Methanocaldococcus</taxon>
    </lineage>
</organism>
<proteinExistence type="predicted"/>